<feature type="transit peptide" description="Chloroplast" evidence="1">
    <location>
        <begin position="1"/>
        <end position="28"/>
    </location>
</feature>
<feature type="transit peptide" description="Thylakoid" evidence="2">
    <location>
        <begin position="29"/>
        <end position="73"/>
    </location>
</feature>
<feature type="chain" id="PRO_0000026941" description="Protease Do-like 5, chloroplastic">
    <location>
        <begin position="74"/>
        <end position="323"/>
    </location>
</feature>
<feature type="region of interest" description="Serine protease">
    <location>
        <begin position="186"/>
        <end position="283"/>
    </location>
</feature>
<feature type="active site" description="Charge relay system" evidence="1">
    <location>
        <position position="147"/>
    </location>
</feature>
<feature type="active site" description="Charge relay system" evidence="1">
    <location>
        <position position="188"/>
    </location>
</feature>
<feature type="active site" description="Charge relay system" evidence="1">
    <location>
        <position position="266"/>
    </location>
</feature>
<feature type="sequence conflict" description="In Ref. 1; AAF24060." evidence="3" ref="1">
    <original>R</original>
    <variation>G</variation>
    <location>
        <position position="42"/>
    </location>
</feature>
<feature type="helix" evidence="4">
    <location>
        <begin position="86"/>
        <end position="98"/>
    </location>
</feature>
<feature type="helix" evidence="4">
    <location>
        <begin position="99"/>
        <end position="101"/>
    </location>
</feature>
<feature type="strand" evidence="4">
    <location>
        <begin position="102"/>
        <end position="107"/>
    </location>
</feature>
<feature type="strand" evidence="4">
    <location>
        <begin position="129"/>
        <end position="135"/>
    </location>
</feature>
<feature type="strand" evidence="4">
    <location>
        <begin position="141"/>
        <end position="144"/>
    </location>
</feature>
<feature type="helix" evidence="4">
    <location>
        <begin position="147"/>
        <end position="149"/>
    </location>
</feature>
<feature type="helix" evidence="4">
    <location>
        <begin position="150"/>
        <end position="154"/>
    </location>
</feature>
<feature type="turn" evidence="4">
    <location>
        <begin position="157"/>
        <end position="159"/>
    </location>
</feature>
<feature type="strand" evidence="4">
    <location>
        <begin position="163"/>
        <end position="167"/>
    </location>
</feature>
<feature type="strand" evidence="4">
    <location>
        <begin position="173"/>
        <end position="177"/>
    </location>
</feature>
<feature type="strand" evidence="4">
    <location>
        <begin position="179"/>
        <end position="184"/>
    </location>
</feature>
<feature type="helix" evidence="4">
    <location>
        <begin position="185"/>
        <end position="187"/>
    </location>
</feature>
<feature type="strand" evidence="4">
    <location>
        <begin position="189"/>
        <end position="193"/>
    </location>
</feature>
<feature type="strand" evidence="4">
    <location>
        <begin position="217"/>
        <end position="222"/>
    </location>
</feature>
<feature type="strand" evidence="4">
    <location>
        <begin position="224"/>
        <end position="228"/>
    </location>
</feature>
<feature type="strand" evidence="4">
    <location>
        <begin position="230"/>
        <end position="239"/>
    </location>
</feature>
<feature type="strand" evidence="4">
    <location>
        <begin position="255"/>
        <end position="257"/>
    </location>
</feature>
<feature type="helix" evidence="4">
    <location>
        <begin position="263"/>
        <end position="265"/>
    </location>
</feature>
<feature type="strand" evidence="4">
    <location>
        <begin position="268"/>
        <end position="271"/>
    </location>
</feature>
<feature type="strand" evidence="4">
    <location>
        <begin position="277"/>
        <end position="281"/>
    </location>
</feature>
<feature type="strand" evidence="4">
    <location>
        <begin position="297"/>
        <end position="301"/>
    </location>
</feature>
<feature type="helix" evidence="4">
    <location>
        <begin position="302"/>
        <end position="315"/>
    </location>
</feature>
<reference key="1">
    <citation type="submission" date="1998-12" db="EMBL/GenBank/DDBJ databases">
        <title>Identification and characterization of the chloroplast HhoA protease, a homolog to the bacterial periplasmic protease HhoA.</title>
        <authorList>
            <person name="Lensch M.H.A."/>
            <person name="Herrmann R.G."/>
            <person name="Sokolenko A."/>
        </authorList>
    </citation>
    <scope>NUCLEOTIDE SEQUENCE [MRNA]</scope>
</reference>
<reference key="2">
    <citation type="journal article" date="1999" name="Nature">
        <title>Sequence and analysis of chromosome 4 of the plant Arabidopsis thaliana.</title>
        <authorList>
            <person name="Mayer K.F.X."/>
            <person name="Schueller C."/>
            <person name="Wambutt R."/>
            <person name="Murphy G."/>
            <person name="Volckaert G."/>
            <person name="Pohl T."/>
            <person name="Duesterhoeft A."/>
            <person name="Stiekema W."/>
            <person name="Entian K.-D."/>
            <person name="Terryn N."/>
            <person name="Harris B."/>
            <person name="Ansorge W."/>
            <person name="Brandt P."/>
            <person name="Grivell L.A."/>
            <person name="Rieger M."/>
            <person name="Weichselgartner M."/>
            <person name="de Simone V."/>
            <person name="Obermaier B."/>
            <person name="Mache R."/>
            <person name="Mueller M."/>
            <person name="Kreis M."/>
            <person name="Delseny M."/>
            <person name="Puigdomenech P."/>
            <person name="Watson M."/>
            <person name="Schmidtheini T."/>
            <person name="Reichert B."/>
            <person name="Portetelle D."/>
            <person name="Perez-Alonso M."/>
            <person name="Boutry M."/>
            <person name="Bancroft I."/>
            <person name="Vos P."/>
            <person name="Hoheisel J."/>
            <person name="Zimmermann W."/>
            <person name="Wedler H."/>
            <person name="Ridley P."/>
            <person name="Langham S.-A."/>
            <person name="McCullagh B."/>
            <person name="Bilham L."/>
            <person name="Robben J."/>
            <person name="van der Schueren J."/>
            <person name="Grymonprez B."/>
            <person name="Chuang Y.-J."/>
            <person name="Vandenbussche F."/>
            <person name="Braeken M."/>
            <person name="Weltjens I."/>
            <person name="Voet M."/>
            <person name="Bastiaens I."/>
            <person name="Aert R."/>
            <person name="Defoor E."/>
            <person name="Weitzenegger T."/>
            <person name="Bothe G."/>
            <person name="Ramsperger U."/>
            <person name="Hilbert H."/>
            <person name="Braun M."/>
            <person name="Holzer E."/>
            <person name="Brandt A."/>
            <person name="Peters S."/>
            <person name="van Staveren M."/>
            <person name="Dirkse W."/>
            <person name="Mooijman P."/>
            <person name="Klein Lankhorst R."/>
            <person name="Rose M."/>
            <person name="Hauf J."/>
            <person name="Koetter P."/>
            <person name="Berneiser S."/>
            <person name="Hempel S."/>
            <person name="Feldpausch M."/>
            <person name="Lamberth S."/>
            <person name="Van den Daele H."/>
            <person name="De Keyser A."/>
            <person name="Buysshaert C."/>
            <person name="Gielen J."/>
            <person name="Villarroel R."/>
            <person name="De Clercq R."/>
            <person name="van Montagu M."/>
            <person name="Rogers J."/>
            <person name="Cronin A."/>
            <person name="Quail M.A."/>
            <person name="Bray-Allen S."/>
            <person name="Clark L."/>
            <person name="Doggett J."/>
            <person name="Hall S."/>
            <person name="Kay M."/>
            <person name="Lennard N."/>
            <person name="McLay K."/>
            <person name="Mayes R."/>
            <person name="Pettett A."/>
            <person name="Rajandream M.A."/>
            <person name="Lyne M."/>
            <person name="Benes V."/>
            <person name="Rechmann S."/>
            <person name="Borkova D."/>
            <person name="Bloecker H."/>
            <person name="Scharfe M."/>
            <person name="Grimm M."/>
            <person name="Loehnert T.-H."/>
            <person name="Dose S."/>
            <person name="de Haan M."/>
            <person name="Maarse A.C."/>
            <person name="Schaefer M."/>
            <person name="Mueller-Auer S."/>
            <person name="Gabel C."/>
            <person name="Fuchs M."/>
            <person name="Fartmann B."/>
            <person name="Granderath K."/>
            <person name="Dauner D."/>
            <person name="Herzl A."/>
            <person name="Neumann S."/>
            <person name="Argiriou A."/>
            <person name="Vitale D."/>
            <person name="Liguori R."/>
            <person name="Piravandi E."/>
            <person name="Massenet O."/>
            <person name="Quigley F."/>
            <person name="Clabauld G."/>
            <person name="Muendlein A."/>
            <person name="Felber R."/>
            <person name="Schnabl S."/>
            <person name="Hiller R."/>
            <person name="Schmidt W."/>
            <person name="Lecharny A."/>
            <person name="Aubourg S."/>
            <person name="Chefdor F."/>
            <person name="Cooke R."/>
            <person name="Berger C."/>
            <person name="Monfort A."/>
            <person name="Casacuberta E."/>
            <person name="Gibbons T."/>
            <person name="Weber N."/>
            <person name="Vandenbol M."/>
            <person name="Bargues M."/>
            <person name="Terol J."/>
            <person name="Torres A."/>
            <person name="Perez-Perez A."/>
            <person name="Purnelle B."/>
            <person name="Bent E."/>
            <person name="Johnson S."/>
            <person name="Tacon D."/>
            <person name="Jesse T."/>
            <person name="Heijnen L."/>
            <person name="Schwarz S."/>
            <person name="Scholler P."/>
            <person name="Heber S."/>
            <person name="Francs P."/>
            <person name="Bielke C."/>
            <person name="Frishman D."/>
            <person name="Haase D."/>
            <person name="Lemcke K."/>
            <person name="Mewes H.-W."/>
            <person name="Stocker S."/>
            <person name="Zaccaria P."/>
            <person name="Bevan M."/>
            <person name="Wilson R.K."/>
            <person name="de la Bastide M."/>
            <person name="Habermann K."/>
            <person name="Parnell L."/>
            <person name="Dedhia N."/>
            <person name="Gnoj L."/>
            <person name="Schutz K."/>
            <person name="Huang E."/>
            <person name="Spiegel L."/>
            <person name="Sekhon M."/>
            <person name="Murray J."/>
            <person name="Sheet P."/>
            <person name="Cordes M."/>
            <person name="Abu-Threideh J."/>
            <person name="Stoneking T."/>
            <person name="Kalicki J."/>
            <person name="Graves T."/>
            <person name="Harmon G."/>
            <person name="Edwards J."/>
            <person name="Latreille P."/>
            <person name="Courtney L."/>
            <person name="Cloud J."/>
            <person name="Abbott A."/>
            <person name="Scott K."/>
            <person name="Johnson D."/>
            <person name="Minx P."/>
            <person name="Bentley D."/>
            <person name="Fulton B."/>
            <person name="Miller N."/>
            <person name="Greco T."/>
            <person name="Kemp K."/>
            <person name="Kramer J."/>
            <person name="Fulton L."/>
            <person name="Mardis E."/>
            <person name="Dante M."/>
            <person name="Pepin K."/>
            <person name="Hillier L.W."/>
            <person name="Nelson J."/>
            <person name="Spieth J."/>
            <person name="Ryan E."/>
            <person name="Andrews S."/>
            <person name="Geisel C."/>
            <person name="Layman D."/>
            <person name="Du H."/>
            <person name="Ali J."/>
            <person name="Berghoff A."/>
            <person name="Jones K."/>
            <person name="Drone K."/>
            <person name="Cotton M."/>
            <person name="Joshu C."/>
            <person name="Antonoiu B."/>
            <person name="Zidanic M."/>
            <person name="Strong C."/>
            <person name="Sun H."/>
            <person name="Lamar B."/>
            <person name="Yordan C."/>
            <person name="Ma P."/>
            <person name="Zhong J."/>
            <person name="Preston R."/>
            <person name="Vil D."/>
            <person name="Shekher M."/>
            <person name="Matero A."/>
            <person name="Shah R."/>
            <person name="Swaby I.K."/>
            <person name="O'Shaughnessy A."/>
            <person name="Rodriguez M."/>
            <person name="Hoffman J."/>
            <person name="Till S."/>
            <person name="Granat S."/>
            <person name="Shohdy N."/>
            <person name="Hasegawa A."/>
            <person name="Hameed A."/>
            <person name="Lodhi M."/>
            <person name="Johnson A."/>
            <person name="Chen E."/>
            <person name="Marra M.A."/>
            <person name="Martienssen R."/>
            <person name="McCombie W.R."/>
        </authorList>
    </citation>
    <scope>NUCLEOTIDE SEQUENCE [LARGE SCALE GENOMIC DNA]</scope>
    <source>
        <strain>cv. Columbia</strain>
    </source>
</reference>
<reference key="3">
    <citation type="journal article" date="2017" name="Plant J.">
        <title>Araport11: a complete reannotation of the Arabidopsis thaliana reference genome.</title>
        <authorList>
            <person name="Cheng C.Y."/>
            <person name="Krishnakumar V."/>
            <person name="Chan A.P."/>
            <person name="Thibaud-Nissen F."/>
            <person name="Schobel S."/>
            <person name="Town C.D."/>
        </authorList>
    </citation>
    <scope>GENOME REANNOTATION</scope>
    <source>
        <strain>cv. Columbia</strain>
    </source>
</reference>
<reference key="4">
    <citation type="journal article" date="2003" name="Science">
        <title>Empirical analysis of transcriptional activity in the Arabidopsis genome.</title>
        <authorList>
            <person name="Yamada K."/>
            <person name="Lim J."/>
            <person name="Dale J.M."/>
            <person name="Chen H."/>
            <person name="Shinn P."/>
            <person name="Palm C.J."/>
            <person name="Southwick A.M."/>
            <person name="Wu H.C."/>
            <person name="Kim C.J."/>
            <person name="Nguyen M."/>
            <person name="Pham P.K."/>
            <person name="Cheuk R.F."/>
            <person name="Karlin-Newmann G."/>
            <person name="Liu S.X."/>
            <person name="Lam B."/>
            <person name="Sakano H."/>
            <person name="Wu T."/>
            <person name="Yu G."/>
            <person name="Miranda M."/>
            <person name="Quach H.L."/>
            <person name="Tripp M."/>
            <person name="Chang C.H."/>
            <person name="Lee J.M."/>
            <person name="Toriumi M.J."/>
            <person name="Chan M.M."/>
            <person name="Tang C.C."/>
            <person name="Onodera C.S."/>
            <person name="Deng J.M."/>
            <person name="Akiyama K."/>
            <person name="Ansari Y."/>
            <person name="Arakawa T."/>
            <person name="Banh J."/>
            <person name="Banno F."/>
            <person name="Bowser L."/>
            <person name="Brooks S.Y."/>
            <person name="Carninci P."/>
            <person name="Chao Q."/>
            <person name="Choy N."/>
            <person name="Enju A."/>
            <person name="Goldsmith A.D."/>
            <person name="Gurjal M."/>
            <person name="Hansen N.F."/>
            <person name="Hayashizaki Y."/>
            <person name="Johnson-Hopson C."/>
            <person name="Hsuan V.W."/>
            <person name="Iida K."/>
            <person name="Karnes M."/>
            <person name="Khan S."/>
            <person name="Koesema E."/>
            <person name="Ishida J."/>
            <person name="Jiang P.X."/>
            <person name="Jones T."/>
            <person name="Kawai J."/>
            <person name="Kamiya A."/>
            <person name="Meyers C."/>
            <person name="Nakajima M."/>
            <person name="Narusaka M."/>
            <person name="Seki M."/>
            <person name="Sakurai T."/>
            <person name="Satou M."/>
            <person name="Tamse R."/>
            <person name="Vaysberg M."/>
            <person name="Wallender E.K."/>
            <person name="Wong C."/>
            <person name="Yamamura Y."/>
            <person name="Yuan S."/>
            <person name="Shinozaki K."/>
            <person name="Davis R.W."/>
            <person name="Theologis A."/>
            <person name="Ecker J.R."/>
        </authorList>
    </citation>
    <scope>NUCLEOTIDE SEQUENCE [LARGE SCALE MRNA]</scope>
    <source>
        <strain>cv. Columbia</strain>
    </source>
</reference>
<reference key="5">
    <citation type="submission" date="2004-09" db="EMBL/GenBank/DDBJ databases">
        <title>Large-scale analysis of RIKEN Arabidopsis full-length (RAFL) cDNAs.</title>
        <authorList>
            <person name="Totoki Y."/>
            <person name="Seki M."/>
            <person name="Ishida J."/>
            <person name="Nakajima M."/>
            <person name="Enju A."/>
            <person name="Kamiya A."/>
            <person name="Narusaka M."/>
            <person name="Shin-i T."/>
            <person name="Nakagawa M."/>
            <person name="Sakamoto N."/>
            <person name="Oishi K."/>
            <person name="Kohara Y."/>
            <person name="Kobayashi M."/>
            <person name="Toyoda A."/>
            <person name="Sakaki Y."/>
            <person name="Sakurai T."/>
            <person name="Iida K."/>
            <person name="Akiyama K."/>
            <person name="Satou M."/>
            <person name="Toyoda T."/>
            <person name="Konagaya A."/>
            <person name="Carninci P."/>
            <person name="Kawai J."/>
            <person name="Hayashizaki Y."/>
            <person name="Shinozaki K."/>
        </authorList>
    </citation>
    <scope>NUCLEOTIDE SEQUENCE [LARGE SCALE MRNA]</scope>
    <source>
        <strain>cv. Columbia</strain>
    </source>
</reference>
<reference key="6">
    <citation type="journal article" date="2002" name="J. Biol. Chem.">
        <title>Proteome map of the chloroplast lumen of Arabidopsis thaliana.</title>
        <authorList>
            <person name="Schubert M."/>
            <person name="Petersson U.A."/>
            <person name="Haas B.J."/>
            <person name="Funk C."/>
            <person name="Schroeder W.P."/>
            <person name="Kieselbach T."/>
        </authorList>
    </citation>
    <scope>PROTEIN SEQUENCE OF 74-84</scope>
    <scope>SUBCELLULAR LOCATION</scope>
</reference>
<reference key="7">
    <citation type="book" date="1998" name="Photosynthesis: mechanisms and effects">
        <title>Characterization of chloroplast proteases.</title>
        <editorList>
            <person name="Garab G."/>
        </editorList>
        <authorList>
            <person name="Sokolenko A."/>
            <person name="Lensch M.H.A."/>
            <person name="Herrmann R.G."/>
        </authorList>
    </citation>
    <scope>CHARACTERIZATION</scope>
</reference>
<reference key="8">
    <citation type="journal article" date="2001" name="Plant Physiol.">
        <title>Chloroplast and mitochondrial proteases in Arabidopsis. A proposed nomenclature.</title>
        <authorList>
            <person name="Adam Z."/>
            <person name="Adamska I."/>
            <person name="Nakabayashi K."/>
            <person name="Ostersetzer O."/>
            <person name="Haussuhl K."/>
            <person name="Manuell A."/>
            <person name="Zheng B."/>
            <person name="Vallon O."/>
            <person name="Rodermel S.R."/>
            <person name="Shinozaki K."/>
            <person name="Clarke A.K."/>
        </authorList>
    </citation>
    <scope>GENE FAMILY</scope>
    <scope>NOMENCLATURE</scope>
</reference>
<dbReference type="EC" id="3.4.21.-"/>
<dbReference type="EMBL" id="AF114386">
    <property type="protein sequence ID" value="AAF24060.1"/>
    <property type="status" value="ALT_INIT"/>
    <property type="molecule type" value="mRNA"/>
</dbReference>
<dbReference type="EMBL" id="AL021710">
    <property type="protein sequence ID" value="CAA16717.1"/>
    <property type="status" value="ALT_SEQ"/>
    <property type="molecule type" value="Genomic_DNA"/>
</dbReference>
<dbReference type="EMBL" id="AL161548">
    <property type="protein sequence ID" value="CAB78839.1"/>
    <property type="status" value="ALT_SEQ"/>
    <property type="molecule type" value="Genomic_DNA"/>
</dbReference>
<dbReference type="EMBL" id="CP002687">
    <property type="protein sequence ID" value="AEE84033.1"/>
    <property type="molecule type" value="Genomic_DNA"/>
</dbReference>
<dbReference type="EMBL" id="AY056227">
    <property type="protein sequence ID" value="AAL07076.1"/>
    <property type="molecule type" value="mRNA"/>
</dbReference>
<dbReference type="EMBL" id="AY091427">
    <property type="protein sequence ID" value="AAM14366.1"/>
    <property type="molecule type" value="mRNA"/>
</dbReference>
<dbReference type="EMBL" id="AK176772">
    <property type="protein sequence ID" value="BAD44535.1"/>
    <property type="molecule type" value="mRNA"/>
</dbReference>
<dbReference type="PDB" id="4IC5">
    <property type="method" value="X-ray"/>
    <property type="resolution" value="2.61 A"/>
    <property type="chains" value="A/B/C=73-322"/>
</dbReference>
<dbReference type="PDBsum" id="4IC5"/>
<dbReference type="SMR" id="Q9SEL7"/>
<dbReference type="FunCoup" id="Q9SEL7">
    <property type="interactions" value="1010"/>
</dbReference>
<dbReference type="IntAct" id="Q9SEL7">
    <property type="interactions" value="1"/>
</dbReference>
<dbReference type="STRING" id="3702.Q9SEL7"/>
<dbReference type="MEROPS" id="S01.441"/>
<dbReference type="PaxDb" id="3702-AT4G18370.1"/>
<dbReference type="ProteomicsDB" id="224689"/>
<dbReference type="EnsemblPlants" id="AT4G18370.1">
    <property type="protein sequence ID" value="AT4G18370.1"/>
    <property type="gene ID" value="AT4G18370"/>
</dbReference>
<dbReference type="GeneID" id="827564"/>
<dbReference type="Gramene" id="AT4G18370.1">
    <property type="protein sequence ID" value="AT4G18370.1"/>
    <property type="gene ID" value="AT4G18370"/>
</dbReference>
<dbReference type="KEGG" id="ath:AT4G18370"/>
<dbReference type="Araport" id="AT4G18370"/>
<dbReference type="TAIR" id="AT4G18370">
    <property type="gene designation" value="DEG5"/>
</dbReference>
<dbReference type="eggNOG" id="KOG1320">
    <property type="taxonomic scope" value="Eukaryota"/>
</dbReference>
<dbReference type="HOGENOM" id="CLU_020120_7_0_1"/>
<dbReference type="InParanoid" id="Q9SEL7"/>
<dbReference type="OMA" id="TPYSNRY"/>
<dbReference type="PhylomeDB" id="Q9SEL7"/>
<dbReference type="BRENDA" id="3.4.21.107">
    <property type="organism ID" value="399"/>
</dbReference>
<dbReference type="EvolutionaryTrace" id="Q9SEL7"/>
<dbReference type="PRO" id="PR:Q9SEL7"/>
<dbReference type="Proteomes" id="UP000006548">
    <property type="component" value="Chromosome 4"/>
</dbReference>
<dbReference type="ExpressionAtlas" id="Q9SEL7">
    <property type="expression patterns" value="baseline and differential"/>
</dbReference>
<dbReference type="GO" id="GO:0009507">
    <property type="term" value="C:chloroplast"/>
    <property type="evidence" value="ECO:0007005"/>
    <property type="project" value="TAIR"/>
</dbReference>
<dbReference type="GO" id="GO:0009543">
    <property type="term" value="C:chloroplast thylakoid lumen"/>
    <property type="evidence" value="ECO:0000314"/>
    <property type="project" value="TAIR"/>
</dbReference>
<dbReference type="GO" id="GO:0005829">
    <property type="term" value="C:cytosol"/>
    <property type="evidence" value="ECO:0007005"/>
    <property type="project" value="TAIR"/>
</dbReference>
<dbReference type="GO" id="GO:0009579">
    <property type="term" value="C:thylakoid"/>
    <property type="evidence" value="ECO:0007005"/>
    <property type="project" value="TAIR"/>
</dbReference>
<dbReference type="GO" id="GO:0031977">
    <property type="term" value="C:thylakoid lumen"/>
    <property type="evidence" value="ECO:0007005"/>
    <property type="project" value="TAIR"/>
</dbReference>
<dbReference type="GO" id="GO:0004252">
    <property type="term" value="F:serine-type endopeptidase activity"/>
    <property type="evidence" value="ECO:0007669"/>
    <property type="project" value="InterPro"/>
</dbReference>
<dbReference type="GO" id="GO:0010206">
    <property type="term" value="P:photosystem II repair"/>
    <property type="evidence" value="ECO:0000315"/>
    <property type="project" value="TAIR"/>
</dbReference>
<dbReference type="GO" id="GO:0006508">
    <property type="term" value="P:proteolysis"/>
    <property type="evidence" value="ECO:0007669"/>
    <property type="project" value="UniProtKB-KW"/>
</dbReference>
<dbReference type="FunFam" id="2.40.10.10:FF:000308">
    <property type="entry name" value="Protease Do-like 5, chloroplastic"/>
    <property type="match status" value="1"/>
</dbReference>
<dbReference type="Gene3D" id="2.40.10.10">
    <property type="entry name" value="Trypsin-like serine proteases"/>
    <property type="match status" value="2"/>
</dbReference>
<dbReference type="InterPro" id="IPR051201">
    <property type="entry name" value="Chloro_Bact_Ser_Proteases"/>
</dbReference>
<dbReference type="InterPro" id="IPR009003">
    <property type="entry name" value="Peptidase_S1_PA"/>
</dbReference>
<dbReference type="InterPro" id="IPR043504">
    <property type="entry name" value="Peptidase_S1_PA_chymotrypsin"/>
</dbReference>
<dbReference type="InterPro" id="IPR001940">
    <property type="entry name" value="Peptidase_S1C"/>
</dbReference>
<dbReference type="PANTHER" id="PTHR43343">
    <property type="entry name" value="PEPTIDASE S12"/>
    <property type="match status" value="1"/>
</dbReference>
<dbReference type="PANTHER" id="PTHR43343:SF6">
    <property type="entry name" value="PROTEASE DO-LIKE 5, CHLOROPLASTIC ISOFORM X1"/>
    <property type="match status" value="1"/>
</dbReference>
<dbReference type="Pfam" id="PF13365">
    <property type="entry name" value="Trypsin_2"/>
    <property type="match status" value="1"/>
</dbReference>
<dbReference type="PRINTS" id="PR00834">
    <property type="entry name" value="PROTEASES2C"/>
</dbReference>
<dbReference type="SUPFAM" id="SSF50494">
    <property type="entry name" value="Trypsin-like serine proteases"/>
    <property type="match status" value="1"/>
</dbReference>
<gene>
    <name type="primary">DEGP5</name>
    <name type="synonym">HHOA</name>
    <name type="ordered locus">At4g18370</name>
    <name type="ORF">F28J12.30</name>
</gene>
<comment type="function">
    <text>Probable serine protease.</text>
</comment>
<comment type="subcellular location">
    <subcellularLocation>
        <location evidence="2">Plastid</location>
        <location evidence="2">Chloroplast thylakoid lumen</location>
    </subcellularLocation>
</comment>
<comment type="induction">
    <text>By light.</text>
</comment>
<comment type="similarity">
    <text evidence="3">Belongs to the peptidase S1C family.</text>
</comment>
<comment type="sequence caution" evidence="3">
    <conflict type="erroneous initiation">
        <sequence resource="EMBL-CDS" id="AAF24060"/>
    </conflict>
</comment>
<comment type="sequence caution" evidence="3">
    <conflict type="erroneous gene model prediction">
        <sequence resource="EMBL-CDS" id="CAA16717"/>
    </conflict>
    <text>The predicted gene At4g18370 has been split into 2 genes: At4g18370 and At4g18375.</text>
</comment>
<comment type="sequence caution" evidence="3">
    <conflict type="erroneous gene model prediction">
        <sequence resource="EMBL-CDS" id="CAB78839"/>
    </conflict>
    <text>The predicted gene At4g18370 has been split into 2 genes: At4g18370 and At4g18375.</text>
</comment>
<name>DEGP5_ARATH</name>
<accession>Q9SEL7</accession>
<accession>O49507</accession>
<accession>Q93ZW5</accession>
<keyword id="KW-0002">3D-structure</keyword>
<keyword id="KW-0150">Chloroplast</keyword>
<keyword id="KW-0903">Direct protein sequencing</keyword>
<keyword id="KW-0378">Hydrolase</keyword>
<keyword id="KW-0934">Plastid</keyword>
<keyword id="KW-0645">Protease</keyword>
<keyword id="KW-1185">Reference proteome</keyword>
<keyword id="KW-0720">Serine protease</keyword>
<keyword id="KW-0793">Thylakoid</keyword>
<keyword id="KW-0809">Transit peptide</keyword>
<organism>
    <name type="scientific">Arabidopsis thaliana</name>
    <name type="common">Mouse-ear cress</name>
    <dbReference type="NCBI Taxonomy" id="3702"/>
    <lineage>
        <taxon>Eukaryota</taxon>
        <taxon>Viridiplantae</taxon>
        <taxon>Streptophyta</taxon>
        <taxon>Embryophyta</taxon>
        <taxon>Tracheophyta</taxon>
        <taxon>Spermatophyta</taxon>
        <taxon>Magnoliopsida</taxon>
        <taxon>eudicotyledons</taxon>
        <taxon>Gunneridae</taxon>
        <taxon>Pentapetalae</taxon>
        <taxon>rosids</taxon>
        <taxon>malvids</taxon>
        <taxon>Brassicales</taxon>
        <taxon>Brassicaceae</taxon>
        <taxon>Camelineae</taxon>
        <taxon>Arabidopsis</taxon>
    </lineage>
</organism>
<protein>
    <recommendedName>
        <fullName>Protease Do-like 5, chloroplastic</fullName>
        <ecNumber>3.4.21.-</ecNumber>
    </recommendedName>
</protein>
<sequence length="323" mass="34923">MTMALASSKAFSSIFNTLSPINQSKFVLACSGSNHVDVIDRRRRIMIFGSSLALTSSLLGSNQQRLPMESAIALEQFKEKEEELEEEEERNVNLFQKTSPSVVYIEAIELPKTSSGDILTDEENGKIEGTGSGFVWDKLGHIVTNYHVIAKLATDQFGLQRCKVSLVDAKGTRFSKEGKIVGLDPDNDLAVLKIETEGRELNPVVLGTSNDLRVGQSCFAIGNPYGYENTLTIGVVSGLGREIPSPNGKSISEAIQTDADINSGNSGGPLLDSYGHTIGVNTATFTRKGSGMSSGVNFAIPIDTVVRTVPYLIVYGTAYRDRF</sequence>
<evidence type="ECO:0000255" key="1"/>
<evidence type="ECO:0000269" key="2">
    <source>
    </source>
</evidence>
<evidence type="ECO:0000305" key="3"/>
<evidence type="ECO:0007829" key="4">
    <source>
        <dbReference type="PDB" id="4IC5"/>
    </source>
</evidence>
<proteinExistence type="evidence at protein level"/>